<comment type="function">
    <text evidence="1">Plays a role as a neuroprotective and antiapoptotic factor.</text>
</comment>
<comment type="subcellular location">
    <subcellularLocation>
        <location evidence="1">Secreted</location>
    </subcellularLocation>
    <subcellularLocation>
        <location evidence="1">Cytoplasm</location>
    </subcellularLocation>
</comment>
<comment type="tissue specificity">
    <text evidence="2">Highly expressed in testis. Also expressed in kidney, heart, skeletal muscles and brain.</text>
</comment>
<comment type="induction">
    <text evidence="2">Expression is not affected following staurosporine (STS) treatment. Down-regulated 6 hours following beta-carotene treatment, remains down-regulated 24 hours following beta-carotene treatment.</text>
</comment>
<comment type="similarity">
    <text evidence="4">Belongs to the humanin family.</text>
</comment>
<comment type="caution">
    <text evidence="5">The humanin peptide has been shown to be biologically active but is the product of a mitochondrial gene, MT-RNR2. The mechanisms allowing the production and the secretion of humanin from the mitochondrial gene remaining unclear, the possibility exist that the physiologically active humanin peptide is encoded by one of the related genes present in the nuclear genome including the one described here (PubMed:19477263).</text>
</comment>
<protein>
    <recommendedName>
        <fullName evidence="4">Humanin-like 4</fullName>
        <shortName evidence="3">HN4</shortName>
    </recommendedName>
    <alternativeName>
        <fullName evidence="6">MT-RNR2-like protein 4</fullName>
    </alternativeName>
</protein>
<accession>P0CJ71</accession>
<reference key="1">
    <citation type="journal article" date="2004" name="Nature">
        <title>The sequence and analysis of duplication-rich human chromosome 16.</title>
        <authorList>
            <person name="Martin J."/>
            <person name="Han C."/>
            <person name="Gordon L.A."/>
            <person name="Terry A."/>
            <person name="Prabhakar S."/>
            <person name="She X."/>
            <person name="Xie G."/>
            <person name="Hellsten U."/>
            <person name="Chan Y.M."/>
            <person name="Altherr M."/>
            <person name="Couronne O."/>
            <person name="Aerts A."/>
            <person name="Bajorek E."/>
            <person name="Black S."/>
            <person name="Blumer H."/>
            <person name="Branscomb E."/>
            <person name="Brown N.C."/>
            <person name="Bruno W.J."/>
            <person name="Buckingham J.M."/>
            <person name="Callen D.F."/>
            <person name="Campbell C.S."/>
            <person name="Campbell M.L."/>
            <person name="Campbell E.W."/>
            <person name="Caoile C."/>
            <person name="Challacombe J.F."/>
            <person name="Chasteen L.A."/>
            <person name="Chertkov O."/>
            <person name="Chi H.C."/>
            <person name="Christensen M."/>
            <person name="Clark L.M."/>
            <person name="Cohn J.D."/>
            <person name="Denys M."/>
            <person name="Detter J.C."/>
            <person name="Dickson M."/>
            <person name="Dimitrijevic-Bussod M."/>
            <person name="Escobar J."/>
            <person name="Fawcett J.J."/>
            <person name="Flowers D."/>
            <person name="Fotopulos D."/>
            <person name="Glavina T."/>
            <person name="Gomez M."/>
            <person name="Gonzales E."/>
            <person name="Goodstein D."/>
            <person name="Goodwin L.A."/>
            <person name="Grady D.L."/>
            <person name="Grigoriev I."/>
            <person name="Groza M."/>
            <person name="Hammon N."/>
            <person name="Hawkins T."/>
            <person name="Haydu L."/>
            <person name="Hildebrand C.E."/>
            <person name="Huang W."/>
            <person name="Israni S."/>
            <person name="Jett J."/>
            <person name="Jewett P.B."/>
            <person name="Kadner K."/>
            <person name="Kimball H."/>
            <person name="Kobayashi A."/>
            <person name="Krawczyk M.-C."/>
            <person name="Leyba T."/>
            <person name="Longmire J.L."/>
            <person name="Lopez F."/>
            <person name="Lou Y."/>
            <person name="Lowry S."/>
            <person name="Ludeman T."/>
            <person name="Manohar C.F."/>
            <person name="Mark G.A."/>
            <person name="McMurray K.L."/>
            <person name="Meincke L.J."/>
            <person name="Morgan J."/>
            <person name="Moyzis R.K."/>
            <person name="Mundt M.O."/>
            <person name="Munk A.C."/>
            <person name="Nandkeshwar R.D."/>
            <person name="Pitluck S."/>
            <person name="Pollard M."/>
            <person name="Predki P."/>
            <person name="Parson-Quintana B."/>
            <person name="Ramirez L."/>
            <person name="Rash S."/>
            <person name="Retterer J."/>
            <person name="Ricke D.O."/>
            <person name="Robinson D.L."/>
            <person name="Rodriguez A."/>
            <person name="Salamov A."/>
            <person name="Saunders E.H."/>
            <person name="Scott D."/>
            <person name="Shough T."/>
            <person name="Stallings R.L."/>
            <person name="Stalvey M."/>
            <person name="Sutherland R.D."/>
            <person name="Tapia R."/>
            <person name="Tesmer J.G."/>
            <person name="Thayer N."/>
            <person name="Thompson L.S."/>
            <person name="Tice H."/>
            <person name="Torney D.C."/>
            <person name="Tran-Gyamfi M."/>
            <person name="Tsai M."/>
            <person name="Ulanovsky L.E."/>
            <person name="Ustaszewska A."/>
            <person name="Vo N."/>
            <person name="White P.S."/>
            <person name="Williams A.L."/>
            <person name="Wills P.L."/>
            <person name="Wu J.-R."/>
            <person name="Wu K."/>
            <person name="Yang J."/>
            <person name="DeJong P."/>
            <person name="Bruce D."/>
            <person name="Doggett N.A."/>
            <person name="Deaven L."/>
            <person name="Schmutz J."/>
            <person name="Grimwood J."/>
            <person name="Richardson P."/>
            <person name="Rokhsar D.S."/>
            <person name="Eichler E.E."/>
            <person name="Gilna P."/>
            <person name="Lucas S.M."/>
            <person name="Myers R.M."/>
            <person name="Rubin E.M."/>
            <person name="Pennacchio L.A."/>
        </authorList>
    </citation>
    <scope>NUCLEOTIDE SEQUENCE [LARGE SCALE GENOMIC DNA]</scope>
</reference>
<reference key="2">
    <citation type="journal article" date="2009" name="Genomics">
        <title>Evidence for potential functionality of nuclearly-encoded humanin isoforms.</title>
        <authorList>
            <person name="Bodzioch M."/>
            <person name="Lapicka-Bodzioch K."/>
            <person name="Zapala B."/>
            <person name="Kamysz W."/>
            <person name="Kiec-Wilk B."/>
            <person name="Dembinska-Kiec A."/>
        </authorList>
    </citation>
    <scope>TISSUE SPECIFICITY</scope>
    <scope>INDUCTION</scope>
</reference>
<feature type="chain" id="PRO_0000404553" description="Humanin-like 4">
    <location>
        <begin position="1"/>
        <end position="28"/>
    </location>
</feature>
<keyword id="KW-0963">Cytoplasm</keyword>
<keyword id="KW-1185">Reference proteome</keyword>
<keyword id="KW-0964">Secreted</keyword>
<sequence>MATQGFSCLLLSVSEIDLSMKRQYKQIR</sequence>
<proteinExistence type="evidence at transcript level"/>
<name>HMN4_HUMAN</name>
<organism>
    <name type="scientific">Homo sapiens</name>
    <name type="common">Human</name>
    <dbReference type="NCBI Taxonomy" id="9606"/>
    <lineage>
        <taxon>Eukaryota</taxon>
        <taxon>Metazoa</taxon>
        <taxon>Chordata</taxon>
        <taxon>Craniata</taxon>
        <taxon>Vertebrata</taxon>
        <taxon>Euteleostomi</taxon>
        <taxon>Mammalia</taxon>
        <taxon>Eutheria</taxon>
        <taxon>Euarchontoglires</taxon>
        <taxon>Primates</taxon>
        <taxon>Haplorrhini</taxon>
        <taxon>Catarrhini</taxon>
        <taxon>Hominidae</taxon>
        <taxon>Homo</taxon>
    </lineage>
</organism>
<evidence type="ECO:0000250" key="1">
    <source>
        <dbReference type="UniProtKB" id="Q8IVG9"/>
    </source>
</evidence>
<evidence type="ECO:0000269" key="2">
    <source>
    </source>
</evidence>
<evidence type="ECO:0000303" key="3">
    <source>
    </source>
</evidence>
<evidence type="ECO:0000305" key="4"/>
<evidence type="ECO:0000305" key="5">
    <source>
    </source>
</evidence>
<evidence type="ECO:0000312" key="6">
    <source>
        <dbReference type="HGNC" id="HGNC:37161"/>
    </source>
</evidence>
<dbReference type="EMBL" id="AC025283">
    <property type="status" value="NOT_ANNOTATED_CDS"/>
    <property type="molecule type" value="Genomic_DNA"/>
</dbReference>
<dbReference type="RefSeq" id="NP_001177405.1">
    <property type="nucleotide sequence ID" value="NM_001190476.1"/>
</dbReference>
<dbReference type="STRING" id="9606.ENSP00000382856"/>
<dbReference type="BioMuta" id="MTRNR2L4"/>
<dbReference type="jPOST" id="P0CJ71"/>
<dbReference type="MassIVE" id="P0CJ71"/>
<dbReference type="PaxDb" id="9606-ENSP00000382856"/>
<dbReference type="DNASU" id="100463285"/>
<dbReference type="UCSC" id="uc021tce.2">
    <property type="organism name" value="human"/>
</dbReference>
<dbReference type="AGR" id="HGNC:37161"/>
<dbReference type="DisGeNET" id="100463285"/>
<dbReference type="GeneCards" id="MTRNR2L4"/>
<dbReference type="HGNC" id="HGNC:37161">
    <property type="gene designation" value="MTRNR2L4"/>
</dbReference>
<dbReference type="neXtProt" id="NX_P0CJ71"/>
<dbReference type="VEuPathDB" id="HostDB:ENSG00000232196"/>
<dbReference type="HOGENOM" id="CLU_221584_0_0_1"/>
<dbReference type="InParanoid" id="P0CJ71"/>
<dbReference type="PAN-GO" id="P0CJ71">
    <property type="GO annotations" value="2 GO annotations based on evolutionary models"/>
</dbReference>
<dbReference type="PhylomeDB" id="P0CJ71"/>
<dbReference type="PathwayCommons" id="P0CJ71"/>
<dbReference type="SignaLink" id="P0CJ71"/>
<dbReference type="BioGRID-ORCS" id="100463285">
    <property type="hits" value="11 hits in 583 CRISPR screens"/>
</dbReference>
<dbReference type="ChiTaRS" id="MTRNR2L4">
    <property type="organism name" value="human"/>
</dbReference>
<dbReference type="Pharos" id="P0CJ71">
    <property type="development level" value="Tdark"/>
</dbReference>
<dbReference type="PRO" id="PR:P0CJ71"/>
<dbReference type="Proteomes" id="UP000005640">
    <property type="component" value="Chromosome 16"/>
</dbReference>
<dbReference type="Bgee" id="ENSG00000232196">
    <property type="expression patterns" value="Expressed in male germ line stem cell (sensu Vertebrata) in testis and 82 other cell types or tissues"/>
</dbReference>
<dbReference type="GO" id="GO:0005737">
    <property type="term" value="C:cytoplasm"/>
    <property type="evidence" value="ECO:0007669"/>
    <property type="project" value="UniProtKB-SubCell"/>
</dbReference>
<dbReference type="GO" id="GO:0005576">
    <property type="term" value="C:extracellular region"/>
    <property type="evidence" value="ECO:0007669"/>
    <property type="project" value="UniProtKB-SubCell"/>
</dbReference>
<dbReference type="GO" id="GO:0048019">
    <property type="term" value="F:receptor antagonist activity"/>
    <property type="evidence" value="ECO:0000318"/>
    <property type="project" value="GO_Central"/>
</dbReference>
<dbReference type="GO" id="GO:1900118">
    <property type="term" value="P:negative regulation of execution phase of apoptosis"/>
    <property type="evidence" value="ECO:0000318"/>
    <property type="project" value="GO_Central"/>
</dbReference>
<dbReference type="CDD" id="cd20245">
    <property type="entry name" value="humanin"/>
    <property type="match status" value="1"/>
</dbReference>
<dbReference type="InterPro" id="IPR028139">
    <property type="entry name" value="Humanin"/>
</dbReference>
<dbReference type="PANTHER" id="PTHR33895">
    <property type="entry name" value="HUMANIN-LIKE 4"/>
    <property type="match status" value="1"/>
</dbReference>
<dbReference type="PANTHER" id="PTHR33895:SF5">
    <property type="entry name" value="HUMANIN-LIKE 4"/>
    <property type="match status" value="1"/>
</dbReference>
<dbReference type="Pfam" id="PF15040">
    <property type="entry name" value="Humanin"/>
    <property type="match status" value="1"/>
</dbReference>
<gene>
    <name evidence="6" type="primary">MTRNR2L4</name>
</gene>